<proteinExistence type="uncertain"/>
<gene>
    <name type="ordered locus">YOR345C</name>
    <name type="ORF">O6336</name>
</gene>
<name>YO345_YEAST</name>
<comment type="subcellular location">
    <subcellularLocation>
        <location evidence="2">Membrane</location>
        <topology evidence="2">Single-pass membrane protein</topology>
    </subcellularLocation>
</comment>
<comment type="miscellaneous">
    <text evidence="2">Almost completely overlaps REV1.</text>
</comment>
<comment type="caution">
    <text evidence="3">Product of a dubious gene prediction unlikely to encode a functional protein. Because of that it is not part of the S.cerevisiae S288c complete/reference proteome set.</text>
</comment>
<evidence type="ECO:0000255" key="1"/>
<evidence type="ECO:0000305" key="2"/>
<evidence type="ECO:0000305" key="3">
    <source>
    </source>
</evidence>
<dbReference type="EMBL" id="AY693244">
    <property type="protein sequence ID" value="AAT93263.1"/>
    <property type="molecule type" value="Genomic_DNA"/>
</dbReference>
<dbReference type="EMBL" id="Z75253">
    <property type="protein sequence ID" value="CAA99673.1"/>
    <property type="molecule type" value="Genomic_DNA"/>
</dbReference>
<dbReference type="PIR" id="S67254">
    <property type="entry name" value="S67254"/>
</dbReference>
<dbReference type="DIP" id="DIP-4061N"/>
<dbReference type="IntAct" id="Q08811">
    <property type="interactions" value="1"/>
</dbReference>
<dbReference type="STRING" id="4932.YOR345C"/>
<dbReference type="iPTMnet" id="Q08811"/>
<dbReference type="PaxDb" id="4932-YOR345C"/>
<dbReference type="EnsemblFungi" id="YOR345C_mRNA">
    <property type="protein sequence ID" value="YOR345C"/>
    <property type="gene ID" value="YOR345C"/>
</dbReference>
<dbReference type="AGR" id="SGD:S000005872"/>
<dbReference type="SGD" id="S000005872">
    <property type="gene designation" value="YOR345C"/>
</dbReference>
<dbReference type="HOGENOM" id="CLU_2098749_0_0_1"/>
<dbReference type="GO" id="GO:0016020">
    <property type="term" value="C:membrane"/>
    <property type="evidence" value="ECO:0007669"/>
    <property type="project" value="UniProtKB-SubCell"/>
</dbReference>
<keyword id="KW-0472">Membrane</keyword>
<keyword id="KW-0812">Transmembrane</keyword>
<keyword id="KW-1133">Transmembrane helix</keyword>
<organism>
    <name type="scientific">Saccharomyces cerevisiae (strain ATCC 204508 / S288c)</name>
    <name type="common">Baker's yeast</name>
    <dbReference type="NCBI Taxonomy" id="559292"/>
    <lineage>
        <taxon>Eukaryota</taxon>
        <taxon>Fungi</taxon>
        <taxon>Dikarya</taxon>
        <taxon>Ascomycota</taxon>
        <taxon>Saccharomycotina</taxon>
        <taxon>Saccharomycetes</taxon>
        <taxon>Saccharomycetales</taxon>
        <taxon>Saccharomycetaceae</taxon>
        <taxon>Saccharomyces</taxon>
    </lineage>
</organism>
<feature type="chain" id="PRO_0000299741" description="Putative uncharacterized protein YOR345C">
    <location>
        <begin position="1"/>
        <end position="116"/>
    </location>
</feature>
<feature type="transmembrane region" description="Helical" evidence="1">
    <location>
        <begin position="22"/>
        <end position="42"/>
    </location>
</feature>
<accession>Q08811</accession>
<sequence length="116" mass="12868">MTLRAIGESSPPPRSACNSSQLIFLVVNLKVPAVGLELFLLVWESWLTYSIKESSLNVDRKDLAFKPPVFAVKCESLTLCWLRQLFLSGVSLFIEYSKSLSNKSTRPPCSPIAGYA</sequence>
<reference key="1">
    <citation type="journal article" date="1997" name="Nature">
        <title>The nucleotide sequence of Saccharomyces cerevisiae chromosome XV.</title>
        <authorList>
            <person name="Dujon B."/>
            <person name="Albermann K."/>
            <person name="Aldea M."/>
            <person name="Alexandraki D."/>
            <person name="Ansorge W."/>
            <person name="Arino J."/>
            <person name="Benes V."/>
            <person name="Bohn C."/>
            <person name="Bolotin-Fukuhara M."/>
            <person name="Bordonne R."/>
            <person name="Boyer J."/>
            <person name="Camasses A."/>
            <person name="Casamayor A."/>
            <person name="Casas C."/>
            <person name="Cheret G."/>
            <person name="Cziepluch C."/>
            <person name="Daignan-Fornier B."/>
            <person name="Dang V.-D."/>
            <person name="de Haan M."/>
            <person name="Delius H."/>
            <person name="Durand P."/>
            <person name="Fairhead C."/>
            <person name="Feldmann H."/>
            <person name="Gaillon L."/>
            <person name="Galisson F."/>
            <person name="Gamo F.-J."/>
            <person name="Gancedo C."/>
            <person name="Goffeau A."/>
            <person name="Goulding S.E."/>
            <person name="Grivell L.A."/>
            <person name="Habbig B."/>
            <person name="Hand N.J."/>
            <person name="Hani J."/>
            <person name="Hattenhorst U."/>
            <person name="Hebling U."/>
            <person name="Hernando Y."/>
            <person name="Herrero E."/>
            <person name="Heumann K."/>
            <person name="Hiesel R."/>
            <person name="Hilger F."/>
            <person name="Hofmann B."/>
            <person name="Hollenberg C.P."/>
            <person name="Hughes B."/>
            <person name="Jauniaux J.-C."/>
            <person name="Kalogeropoulos A."/>
            <person name="Katsoulou C."/>
            <person name="Kordes E."/>
            <person name="Lafuente M.J."/>
            <person name="Landt O."/>
            <person name="Louis E.J."/>
            <person name="Maarse A.C."/>
            <person name="Madania A."/>
            <person name="Mannhaupt G."/>
            <person name="Marck C."/>
            <person name="Martin R.P."/>
            <person name="Mewes H.-W."/>
            <person name="Michaux G."/>
            <person name="Paces V."/>
            <person name="Parle-McDermott A.G."/>
            <person name="Pearson B.M."/>
            <person name="Perrin A."/>
            <person name="Pettersson B."/>
            <person name="Poch O."/>
            <person name="Pohl T.M."/>
            <person name="Poirey R."/>
            <person name="Portetelle D."/>
            <person name="Pujol A."/>
            <person name="Purnelle B."/>
            <person name="Ramezani Rad M."/>
            <person name="Rechmann S."/>
            <person name="Schwager C."/>
            <person name="Schweizer M."/>
            <person name="Sor F."/>
            <person name="Sterky F."/>
            <person name="Tarassov I.A."/>
            <person name="Teodoru C."/>
            <person name="Tettelin H."/>
            <person name="Thierry A."/>
            <person name="Tobiasch E."/>
            <person name="Tzermia M."/>
            <person name="Uhlen M."/>
            <person name="Unseld M."/>
            <person name="Valens M."/>
            <person name="Vandenbol M."/>
            <person name="Vetter I."/>
            <person name="Vlcek C."/>
            <person name="Voet M."/>
            <person name="Volckaert G."/>
            <person name="Voss H."/>
            <person name="Wambutt R."/>
            <person name="Wedler H."/>
            <person name="Wiemann S."/>
            <person name="Winsor B."/>
            <person name="Wolfe K.H."/>
            <person name="Zollner A."/>
            <person name="Zumstein E."/>
            <person name="Kleine K."/>
        </authorList>
    </citation>
    <scope>NUCLEOTIDE SEQUENCE [LARGE SCALE GENOMIC DNA]</scope>
    <source>
        <strain>ATCC 204508 / S288c</strain>
    </source>
</reference>
<reference key="2">
    <citation type="journal article" date="2014" name="G3 (Bethesda)">
        <title>The reference genome sequence of Saccharomyces cerevisiae: Then and now.</title>
        <authorList>
            <person name="Engel S.R."/>
            <person name="Dietrich F.S."/>
            <person name="Fisk D.G."/>
            <person name="Binkley G."/>
            <person name="Balakrishnan R."/>
            <person name="Costanzo M.C."/>
            <person name="Dwight S.S."/>
            <person name="Hitz B.C."/>
            <person name="Karra K."/>
            <person name="Nash R.S."/>
            <person name="Weng S."/>
            <person name="Wong E.D."/>
            <person name="Lloyd P."/>
            <person name="Skrzypek M.S."/>
            <person name="Miyasato S.R."/>
            <person name="Simison M."/>
            <person name="Cherry J.M."/>
        </authorList>
    </citation>
    <scope>GENOME REANNOTATION</scope>
    <source>
        <strain>ATCC 204508 / S288c</strain>
    </source>
</reference>
<reference key="3">
    <citation type="journal article" date="2007" name="Genome Res.">
        <title>Approaching a complete repository of sequence-verified protein-encoding clones for Saccharomyces cerevisiae.</title>
        <authorList>
            <person name="Hu Y."/>
            <person name="Rolfs A."/>
            <person name="Bhullar B."/>
            <person name="Murthy T.V.S."/>
            <person name="Zhu C."/>
            <person name="Berger M.F."/>
            <person name="Camargo A.A."/>
            <person name="Kelley F."/>
            <person name="McCarron S."/>
            <person name="Jepson D."/>
            <person name="Richardson A."/>
            <person name="Raphael J."/>
            <person name="Moreira D."/>
            <person name="Taycher E."/>
            <person name="Zuo D."/>
            <person name="Mohr S."/>
            <person name="Kane M.F."/>
            <person name="Williamson J."/>
            <person name="Simpson A.J.G."/>
            <person name="Bulyk M.L."/>
            <person name="Harlow E."/>
            <person name="Marsischky G."/>
            <person name="Kolodner R.D."/>
            <person name="LaBaer J."/>
        </authorList>
    </citation>
    <scope>NUCLEOTIDE SEQUENCE [GENOMIC DNA]</scope>
    <source>
        <strain>ATCC 204508 / S288c</strain>
    </source>
</reference>
<protein>
    <recommendedName>
        <fullName>Putative uncharacterized protein YOR345C</fullName>
    </recommendedName>
</protein>